<organism>
    <name type="scientific">Yersinia pestis (strain Pestoides F)</name>
    <dbReference type="NCBI Taxonomy" id="386656"/>
    <lineage>
        <taxon>Bacteria</taxon>
        <taxon>Pseudomonadati</taxon>
        <taxon>Pseudomonadota</taxon>
        <taxon>Gammaproteobacteria</taxon>
        <taxon>Enterobacterales</taxon>
        <taxon>Yersiniaceae</taxon>
        <taxon>Yersinia</taxon>
    </lineage>
</organism>
<evidence type="ECO:0000255" key="1">
    <source>
        <dbReference type="HAMAP-Rule" id="MF_01366"/>
    </source>
</evidence>
<evidence type="ECO:0000305" key="2"/>
<sequence length="142" mass="16032">MKTFTAKPETVKRDWYVVDASGKTLGRLATELARRLRGKHKAEYTPHVDTGDYIIVLNAEKVAVTGNKRTDKIYYHHTGFVGGIKQATFEEMIARRPERVIEIAVKGMLPKGPLGRAMYRKLKVYAGTEHNHAAQQPQVLDI</sequence>
<feature type="chain" id="PRO_1000055494" description="Large ribosomal subunit protein uL13">
    <location>
        <begin position="1"/>
        <end position="142"/>
    </location>
</feature>
<protein>
    <recommendedName>
        <fullName evidence="1">Large ribosomal subunit protein uL13</fullName>
    </recommendedName>
    <alternativeName>
        <fullName evidence="2">50S ribosomal protein L13</fullName>
    </alternativeName>
</protein>
<keyword id="KW-0687">Ribonucleoprotein</keyword>
<keyword id="KW-0689">Ribosomal protein</keyword>
<gene>
    <name evidence="1" type="primary">rplM</name>
    <name type="ordered locus">YPDSF_0334</name>
</gene>
<accession>A4THJ1</accession>
<dbReference type="EMBL" id="CP000668">
    <property type="protein sequence ID" value="ABP38753.1"/>
    <property type="molecule type" value="Genomic_DNA"/>
</dbReference>
<dbReference type="PIR" id="AD0433">
    <property type="entry name" value="AD0433"/>
</dbReference>
<dbReference type="RefSeq" id="WP_002210132.1">
    <property type="nucleotide sequence ID" value="NZ_CP009715.1"/>
</dbReference>
<dbReference type="SMR" id="A4THJ1"/>
<dbReference type="GeneID" id="96662998"/>
<dbReference type="KEGG" id="ypp:YPDSF_0334"/>
<dbReference type="PATRIC" id="fig|386656.14.peg.1635"/>
<dbReference type="GO" id="GO:0022625">
    <property type="term" value="C:cytosolic large ribosomal subunit"/>
    <property type="evidence" value="ECO:0007669"/>
    <property type="project" value="TreeGrafter"/>
</dbReference>
<dbReference type="GO" id="GO:0003729">
    <property type="term" value="F:mRNA binding"/>
    <property type="evidence" value="ECO:0007669"/>
    <property type="project" value="TreeGrafter"/>
</dbReference>
<dbReference type="GO" id="GO:0003735">
    <property type="term" value="F:structural constituent of ribosome"/>
    <property type="evidence" value="ECO:0007669"/>
    <property type="project" value="InterPro"/>
</dbReference>
<dbReference type="GO" id="GO:0017148">
    <property type="term" value="P:negative regulation of translation"/>
    <property type="evidence" value="ECO:0007669"/>
    <property type="project" value="TreeGrafter"/>
</dbReference>
<dbReference type="GO" id="GO:0006412">
    <property type="term" value="P:translation"/>
    <property type="evidence" value="ECO:0007669"/>
    <property type="project" value="UniProtKB-UniRule"/>
</dbReference>
<dbReference type="CDD" id="cd00392">
    <property type="entry name" value="Ribosomal_L13"/>
    <property type="match status" value="1"/>
</dbReference>
<dbReference type="FunFam" id="3.90.1180.10:FF:000001">
    <property type="entry name" value="50S ribosomal protein L13"/>
    <property type="match status" value="1"/>
</dbReference>
<dbReference type="Gene3D" id="3.90.1180.10">
    <property type="entry name" value="Ribosomal protein L13"/>
    <property type="match status" value="1"/>
</dbReference>
<dbReference type="HAMAP" id="MF_01366">
    <property type="entry name" value="Ribosomal_uL13"/>
    <property type="match status" value="1"/>
</dbReference>
<dbReference type="InterPro" id="IPR005822">
    <property type="entry name" value="Ribosomal_uL13"/>
</dbReference>
<dbReference type="InterPro" id="IPR005823">
    <property type="entry name" value="Ribosomal_uL13_bac-type"/>
</dbReference>
<dbReference type="InterPro" id="IPR023563">
    <property type="entry name" value="Ribosomal_uL13_CS"/>
</dbReference>
<dbReference type="InterPro" id="IPR036899">
    <property type="entry name" value="Ribosomal_uL13_sf"/>
</dbReference>
<dbReference type="NCBIfam" id="TIGR01066">
    <property type="entry name" value="rplM_bact"/>
    <property type="match status" value="1"/>
</dbReference>
<dbReference type="PANTHER" id="PTHR11545:SF2">
    <property type="entry name" value="LARGE RIBOSOMAL SUBUNIT PROTEIN UL13M"/>
    <property type="match status" value="1"/>
</dbReference>
<dbReference type="PANTHER" id="PTHR11545">
    <property type="entry name" value="RIBOSOMAL PROTEIN L13"/>
    <property type="match status" value="1"/>
</dbReference>
<dbReference type="Pfam" id="PF00572">
    <property type="entry name" value="Ribosomal_L13"/>
    <property type="match status" value="1"/>
</dbReference>
<dbReference type="PIRSF" id="PIRSF002181">
    <property type="entry name" value="Ribosomal_L13"/>
    <property type="match status" value="1"/>
</dbReference>
<dbReference type="SUPFAM" id="SSF52161">
    <property type="entry name" value="Ribosomal protein L13"/>
    <property type="match status" value="1"/>
</dbReference>
<dbReference type="PROSITE" id="PS00783">
    <property type="entry name" value="RIBOSOMAL_L13"/>
    <property type="match status" value="1"/>
</dbReference>
<reference key="1">
    <citation type="submission" date="2007-02" db="EMBL/GenBank/DDBJ databases">
        <title>Complete sequence of chromosome of Yersinia pestis Pestoides F.</title>
        <authorList>
            <consortium name="US DOE Joint Genome Institute"/>
            <person name="Copeland A."/>
            <person name="Lucas S."/>
            <person name="Lapidus A."/>
            <person name="Barry K."/>
            <person name="Detter J.C."/>
            <person name="Glavina del Rio T."/>
            <person name="Hammon N."/>
            <person name="Israni S."/>
            <person name="Dalin E."/>
            <person name="Tice H."/>
            <person name="Pitluck S."/>
            <person name="Di Bartolo G."/>
            <person name="Chain P."/>
            <person name="Malfatti S."/>
            <person name="Shin M."/>
            <person name="Vergez L."/>
            <person name="Schmutz J."/>
            <person name="Larimer F."/>
            <person name="Land M."/>
            <person name="Hauser L."/>
            <person name="Worsham P."/>
            <person name="Chu M."/>
            <person name="Bearden S."/>
            <person name="Garcia E."/>
            <person name="Richardson P."/>
        </authorList>
    </citation>
    <scope>NUCLEOTIDE SEQUENCE [LARGE SCALE GENOMIC DNA]</scope>
    <source>
        <strain>Pestoides F</strain>
    </source>
</reference>
<proteinExistence type="inferred from homology"/>
<name>RL13_YERPP</name>
<comment type="function">
    <text evidence="1">This protein is one of the early assembly proteins of the 50S ribosomal subunit, although it is not seen to bind rRNA by itself. It is important during the early stages of 50S assembly.</text>
</comment>
<comment type="subunit">
    <text evidence="1">Part of the 50S ribosomal subunit.</text>
</comment>
<comment type="similarity">
    <text evidence="1">Belongs to the universal ribosomal protein uL13 family.</text>
</comment>